<accession>P96582</accession>
<reference key="1">
    <citation type="submission" date="1997-03" db="EMBL/GenBank/DDBJ databases">
        <title>A 148 kbp sequence of the region between 35 and 47 degree of the Bacillus subtilis genome.</title>
        <authorList>
            <person name="Kasahara Y."/>
            <person name="Nakai S."/>
            <person name="Lee S."/>
            <person name="Sadaie Y."/>
            <person name="Ogasawara N."/>
        </authorList>
    </citation>
    <scope>NUCLEOTIDE SEQUENCE [GENOMIC DNA]</scope>
    <source>
        <strain>168</strain>
    </source>
</reference>
<reference key="2">
    <citation type="journal article" date="1997" name="Nature">
        <title>The complete genome sequence of the Gram-positive bacterium Bacillus subtilis.</title>
        <authorList>
            <person name="Kunst F."/>
            <person name="Ogasawara N."/>
            <person name="Moszer I."/>
            <person name="Albertini A.M."/>
            <person name="Alloni G."/>
            <person name="Azevedo V."/>
            <person name="Bertero M.G."/>
            <person name="Bessieres P."/>
            <person name="Bolotin A."/>
            <person name="Borchert S."/>
            <person name="Borriss R."/>
            <person name="Boursier L."/>
            <person name="Brans A."/>
            <person name="Braun M."/>
            <person name="Brignell S.C."/>
            <person name="Bron S."/>
            <person name="Brouillet S."/>
            <person name="Bruschi C.V."/>
            <person name="Caldwell B."/>
            <person name="Capuano V."/>
            <person name="Carter N.M."/>
            <person name="Choi S.-K."/>
            <person name="Codani J.-J."/>
            <person name="Connerton I.F."/>
            <person name="Cummings N.J."/>
            <person name="Daniel R.A."/>
            <person name="Denizot F."/>
            <person name="Devine K.M."/>
            <person name="Duesterhoeft A."/>
            <person name="Ehrlich S.D."/>
            <person name="Emmerson P.T."/>
            <person name="Entian K.-D."/>
            <person name="Errington J."/>
            <person name="Fabret C."/>
            <person name="Ferrari E."/>
            <person name="Foulger D."/>
            <person name="Fritz C."/>
            <person name="Fujita M."/>
            <person name="Fujita Y."/>
            <person name="Fuma S."/>
            <person name="Galizzi A."/>
            <person name="Galleron N."/>
            <person name="Ghim S.-Y."/>
            <person name="Glaser P."/>
            <person name="Goffeau A."/>
            <person name="Golightly E.J."/>
            <person name="Grandi G."/>
            <person name="Guiseppi G."/>
            <person name="Guy B.J."/>
            <person name="Haga K."/>
            <person name="Haiech J."/>
            <person name="Harwood C.R."/>
            <person name="Henaut A."/>
            <person name="Hilbert H."/>
            <person name="Holsappel S."/>
            <person name="Hosono S."/>
            <person name="Hullo M.-F."/>
            <person name="Itaya M."/>
            <person name="Jones L.-M."/>
            <person name="Joris B."/>
            <person name="Karamata D."/>
            <person name="Kasahara Y."/>
            <person name="Klaerr-Blanchard M."/>
            <person name="Klein C."/>
            <person name="Kobayashi Y."/>
            <person name="Koetter P."/>
            <person name="Koningstein G."/>
            <person name="Krogh S."/>
            <person name="Kumano M."/>
            <person name="Kurita K."/>
            <person name="Lapidus A."/>
            <person name="Lardinois S."/>
            <person name="Lauber J."/>
            <person name="Lazarevic V."/>
            <person name="Lee S.-M."/>
            <person name="Levine A."/>
            <person name="Liu H."/>
            <person name="Masuda S."/>
            <person name="Mauel C."/>
            <person name="Medigue C."/>
            <person name="Medina N."/>
            <person name="Mellado R.P."/>
            <person name="Mizuno M."/>
            <person name="Moestl D."/>
            <person name="Nakai S."/>
            <person name="Noback M."/>
            <person name="Noone D."/>
            <person name="O'Reilly M."/>
            <person name="Ogawa K."/>
            <person name="Ogiwara A."/>
            <person name="Oudega B."/>
            <person name="Park S.-H."/>
            <person name="Parro V."/>
            <person name="Pohl T.M."/>
            <person name="Portetelle D."/>
            <person name="Porwollik S."/>
            <person name="Prescott A.M."/>
            <person name="Presecan E."/>
            <person name="Pujic P."/>
            <person name="Purnelle B."/>
            <person name="Rapoport G."/>
            <person name="Rey M."/>
            <person name="Reynolds S."/>
            <person name="Rieger M."/>
            <person name="Rivolta C."/>
            <person name="Rocha E."/>
            <person name="Roche B."/>
            <person name="Rose M."/>
            <person name="Sadaie Y."/>
            <person name="Sato T."/>
            <person name="Scanlan E."/>
            <person name="Schleich S."/>
            <person name="Schroeter R."/>
            <person name="Scoffone F."/>
            <person name="Sekiguchi J."/>
            <person name="Sekowska A."/>
            <person name="Seror S.J."/>
            <person name="Serror P."/>
            <person name="Shin B.-S."/>
            <person name="Soldo B."/>
            <person name="Sorokin A."/>
            <person name="Tacconi E."/>
            <person name="Takagi T."/>
            <person name="Takahashi H."/>
            <person name="Takemaru K."/>
            <person name="Takeuchi M."/>
            <person name="Tamakoshi A."/>
            <person name="Tanaka T."/>
            <person name="Terpstra P."/>
            <person name="Tognoni A."/>
            <person name="Tosato V."/>
            <person name="Uchiyama S."/>
            <person name="Vandenbol M."/>
            <person name="Vannier F."/>
            <person name="Vassarotti A."/>
            <person name="Viari A."/>
            <person name="Wambutt R."/>
            <person name="Wedler E."/>
            <person name="Wedler H."/>
            <person name="Weitzenegger T."/>
            <person name="Winters P."/>
            <person name="Wipat A."/>
            <person name="Yamamoto H."/>
            <person name="Yamane K."/>
            <person name="Yasumoto K."/>
            <person name="Yata K."/>
            <person name="Yoshida K."/>
            <person name="Yoshikawa H.-F."/>
            <person name="Zumstein E."/>
            <person name="Yoshikawa H."/>
            <person name="Danchin A."/>
        </authorList>
    </citation>
    <scope>NUCLEOTIDE SEQUENCE [LARGE SCALE GENOMIC DNA]</scope>
    <source>
        <strain>168</strain>
    </source>
</reference>
<reference key="3">
    <citation type="journal article" date="1997" name="Mol. Gen. Genet.">
        <title>Characterization of an lrp-like (lrpC) gene from Bacillus subtilis.</title>
        <authorList>
            <person name="Beloin C."/>
            <person name="Ayora S."/>
            <person name="Exley R."/>
            <person name="Hirschbein L."/>
            <person name="Ogasawara N."/>
            <person name="Kasahara Y."/>
            <person name="Alonso J.C."/>
            <person name="Le Hegarat F."/>
        </authorList>
    </citation>
    <scope>CHARACTERIZATION</scope>
</reference>
<name>LRPC_BACSU</name>
<keyword id="KW-0002">3D-structure</keyword>
<keyword id="KW-0238">DNA-binding</keyword>
<keyword id="KW-1185">Reference proteome</keyword>
<keyword id="KW-0804">Transcription</keyword>
<keyword id="KW-0805">Transcription regulation</keyword>
<gene>
    <name type="primary">lrpC</name>
    <name type="synonym">ydaI</name>
    <name type="ordered locus">BSU04250</name>
</gene>
<feature type="chain" id="PRO_0000111740" description="HTH-type transcriptional regulator LrpC">
    <location>
        <begin position="1"/>
        <end position="144"/>
    </location>
</feature>
<feature type="domain" description="HTH asnC-type" evidence="1">
    <location>
        <begin position="3"/>
        <end position="64"/>
    </location>
</feature>
<feature type="DNA-binding region" description="H-T-H motif" evidence="1">
    <location>
        <begin position="22"/>
        <end position="41"/>
    </location>
</feature>
<feature type="helix" evidence="3">
    <location>
        <begin position="5"/>
        <end position="16"/>
    </location>
</feature>
<feature type="helix" evidence="3">
    <location>
        <begin position="22"/>
        <end position="29"/>
    </location>
</feature>
<feature type="helix" evidence="3">
    <location>
        <begin position="33"/>
        <end position="45"/>
    </location>
</feature>
<feature type="strand" evidence="3">
    <location>
        <begin position="48"/>
        <end position="56"/>
    </location>
</feature>
<feature type="helix" evidence="3">
    <location>
        <begin position="59"/>
        <end position="61"/>
    </location>
</feature>
<feature type="strand" evidence="3">
    <location>
        <begin position="65"/>
        <end position="73"/>
    </location>
</feature>
<feature type="helix" evidence="3">
    <location>
        <begin position="74"/>
        <end position="76"/>
    </location>
</feature>
<feature type="helix" evidence="3">
    <location>
        <begin position="78"/>
        <end position="86"/>
    </location>
</feature>
<feature type="strand" evidence="3">
    <location>
        <begin position="91"/>
        <end position="111"/>
    </location>
</feature>
<feature type="helix" evidence="3">
    <location>
        <begin position="112"/>
        <end position="122"/>
    </location>
</feature>
<feature type="turn" evidence="3">
    <location>
        <begin position="123"/>
        <end position="125"/>
    </location>
</feature>
<feature type="strand" evidence="3">
    <location>
        <begin position="126"/>
        <end position="136"/>
    </location>
</feature>
<evidence type="ECO:0000255" key="1">
    <source>
        <dbReference type="PROSITE-ProRule" id="PRU00319"/>
    </source>
</evidence>
<evidence type="ECO:0000305" key="2"/>
<evidence type="ECO:0007829" key="3">
    <source>
        <dbReference type="PDB" id="2CFX"/>
    </source>
</evidence>
<proteinExistence type="evidence at protein level"/>
<dbReference type="EMBL" id="AB001488">
    <property type="protein sequence ID" value="BAA19262.1"/>
    <property type="status" value="ALT_INIT"/>
    <property type="molecule type" value="Genomic_DNA"/>
</dbReference>
<dbReference type="EMBL" id="AL009126">
    <property type="protein sequence ID" value="CAB12232.1"/>
    <property type="molecule type" value="Genomic_DNA"/>
</dbReference>
<dbReference type="PIR" id="F69653">
    <property type="entry name" value="F69653"/>
</dbReference>
<dbReference type="RefSeq" id="NP_388306.1">
    <property type="nucleotide sequence ID" value="NC_000964.3"/>
</dbReference>
<dbReference type="RefSeq" id="WP_003246585.1">
    <property type="nucleotide sequence ID" value="NZ_OZ025638.1"/>
</dbReference>
<dbReference type="PDB" id="2CFX">
    <property type="method" value="X-ray"/>
    <property type="resolution" value="2.40 A"/>
    <property type="chains" value="A/B/C/D/E/F/G/H=1-144"/>
</dbReference>
<dbReference type="PDBsum" id="2CFX"/>
<dbReference type="SMR" id="P96582"/>
<dbReference type="FunCoup" id="P96582">
    <property type="interactions" value="16"/>
</dbReference>
<dbReference type="STRING" id="224308.BSU04250"/>
<dbReference type="PaxDb" id="224308-BSU04250"/>
<dbReference type="EnsemblBacteria" id="CAB12232">
    <property type="protein sequence ID" value="CAB12232"/>
    <property type="gene ID" value="BSU_04250"/>
</dbReference>
<dbReference type="GeneID" id="76985496"/>
<dbReference type="GeneID" id="940147"/>
<dbReference type="KEGG" id="bsu:BSU04250"/>
<dbReference type="PATRIC" id="fig|224308.179.peg.451"/>
<dbReference type="eggNOG" id="COG1522">
    <property type="taxonomic scope" value="Bacteria"/>
</dbReference>
<dbReference type="InParanoid" id="P96582"/>
<dbReference type="OrthoDB" id="34294at2"/>
<dbReference type="PhylomeDB" id="P96582"/>
<dbReference type="BioCyc" id="BSUB:BSU04250-MONOMER"/>
<dbReference type="EvolutionaryTrace" id="P96582"/>
<dbReference type="Proteomes" id="UP000001570">
    <property type="component" value="Chromosome"/>
</dbReference>
<dbReference type="GO" id="GO:0005829">
    <property type="term" value="C:cytosol"/>
    <property type="evidence" value="ECO:0000318"/>
    <property type="project" value="GO_Central"/>
</dbReference>
<dbReference type="GO" id="GO:0043565">
    <property type="term" value="F:sequence-specific DNA binding"/>
    <property type="evidence" value="ECO:0000318"/>
    <property type="project" value="GO_Central"/>
</dbReference>
<dbReference type="GO" id="GO:0043200">
    <property type="term" value="P:response to amino acid"/>
    <property type="evidence" value="ECO:0000318"/>
    <property type="project" value="GO_Central"/>
</dbReference>
<dbReference type="FunFam" id="1.10.10.10:FF:000186">
    <property type="entry name" value="AsnC family transcriptional regulator"/>
    <property type="match status" value="1"/>
</dbReference>
<dbReference type="Gene3D" id="3.30.70.920">
    <property type="match status" value="1"/>
</dbReference>
<dbReference type="Gene3D" id="1.10.10.10">
    <property type="entry name" value="Winged helix-like DNA-binding domain superfamily/Winged helix DNA-binding domain"/>
    <property type="match status" value="1"/>
</dbReference>
<dbReference type="InterPro" id="IPR000485">
    <property type="entry name" value="AsnC-type_HTH_dom"/>
</dbReference>
<dbReference type="InterPro" id="IPR011008">
    <property type="entry name" value="Dimeric_a/b-barrel"/>
</dbReference>
<dbReference type="InterPro" id="IPR019888">
    <property type="entry name" value="Tscrpt_reg_AsnC-like"/>
</dbReference>
<dbReference type="InterPro" id="IPR019887">
    <property type="entry name" value="Tscrpt_reg_AsnC/Lrp_C"/>
</dbReference>
<dbReference type="InterPro" id="IPR036388">
    <property type="entry name" value="WH-like_DNA-bd_sf"/>
</dbReference>
<dbReference type="InterPro" id="IPR036390">
    <property type="entry name" value="WH_DNA-bd_sf"/>
</dbReference>
<dbReference type="PANTHER" id="PTHR30154:SF53">
    <property type="entry name" value="HTH-TYPE TRANSCRIPTIONAL REGULATOR LRPC"/>
    <property type="match status" value="1"/>
</dbReference>
<dbReference type="PANTHER" id="PTHR30154">
    <property type="entry name" value="LEUCINE-RESPONSIVE REGULATORY PROTEIN"/>
    <property type="match status" value="1"/>
</dbReference>
<dbReference type="Pfam" id="PF01037">
    <property type="entry name" value="AsnC_trans_reg"/>
    <property type="match status" value="1"/>
</dbReference>
<dbReference type="Pfam" id="PF13412">
    <property type="entry name" value="HTH_24"/>
    <property type="match status" value="1"/>
</dbReference>
<dbReference type="PRINTS" id="PR00033">
    <property type="entry name" value="HTHASNC"/>
</dbReference>
<dbReference type="SMART" id="SM00344">
    <property type="entry name" value="HTH_ASNC"/>
    <property type="match status" value="1"/>
</dbReference>
<dbReference type="SUPFAM" id="SSF54909">
    <property type="entry name" value="Dimeric alpha+beta barrel"/>
    <property type="match status" value="1"/>
</dbReference>
<dbReference type="SUPFAM" id="SSF46785">
    <property type="entry name" value="Winged helix' DNA-binding domain"/>
    <property type="match status" value="1"/>
</dbReference>
<dbReference type="PROSITE" id="PS50956">
    <property type="entry name" value="HTH_ASNC_2"/>
    <property type="match status" value="1"/>
</dbReference>
<sequence>MKLDQIDLNIIEELKKDSRLSMRELGRKIKLSPPSVTERVRQLESFGIIKQYTLEVDQKKLGLPVSCIVEATVKNADYERFKSYIQTLPNIEFCYRIAGAACYMLKINAESLEAVEDFINKTSPYAQTVTHVIFSEIDTKNGRG</sequence>
<comment type="function">
    <text>Transcriptional regulator with a possible role in regulation of amino acid metabolism. Plays a role in the growth phase transition.</text>
</comment>
<comment type="sequence caution" evidence="2">
    <conflict type="erroneous initiation">
        <sequence resource="EMBL-CDS" id="BAA19262"/>
    </conflict>
</comment>
<organism>
    <name type="scientific">Bacillus subtilis (strain 168)</name>
    <dbReference type="NCBI Taxonomy" id="224308"/>
    <lineage>
        <taxon>Bacteria</taxon>
        <taxon>Bacillati</taxon>
        <taxon>Bacillota</taxon>
        <taxon>Bacilli</taxon>
        <taxon>Bacillales</taxon>
        <taxon>Bacillaceae</taxon>
        <taxon>Bacillus</taxon>
    </lineage>
</organism>
<protein>
    <recommendedName>
        <fullName>HTH-type transcriptional regulator LrpC</fullName>
    </recommendedName>
</protein>